<sequence>MKIAVMTDSTSYLSQDLIDKYNIQIAPLSVTFDDGKNFTESNEIAIEEFYNKMASSQTIPTTSQPAIGEWITKYEMLRDQGYTDIIVICLSSGISGSYQSSYQAGEMVEGVNVHAFDSKLAAMIEGCYVLRAIEMVEEGYEPQQIIDDLTNMREHTGAYLIVDDLKNLQKSGRITGAQAWVGTLLKMKPVLKFEDGKIIPEEKVRTKKRAIQTLEKKVLDIVKDFEEVTLFVINGDHFEDGQALYKKLQEDCPSGYQVAYSEFGPVVAAHLGSGGLGLGYVGRKIRLT</sequence>
<keyword id="KW-0002">3D-structure</keyword>
<keyword id="KW-0446">Lipid-binding</keyword>
<name>YU230_STAAU</name>
<accession>P0A0N2</accession>
<accession>Q99VM6</accession>
<reference key="1">
    <citation type="submission" date="1997-04" db="EMBL/GenBank/DDBJ databases">
        <title>The gene cluster adjacent to llm.</title>
        <authorList>
            <person name="Maki H."/>
            <person name="Murakami K."/>
        </authorList>
    </citation>
    <scope>NUCLEOTIDE SEQUENCE [GENOMIC DNA]</scope>
    <source>
        <strain>SRM551</strain>
    </source>
</reference>
<proteinExistence type="evidence at protein level"/>
<dbReference type="EMBL" id="AB002692">
    <property type="protein sequence ID" value="BAB62083.1"/>
    <property type="molecule type" value="Genomic_DNA"/>
</dbReference>
<dbReference type="RefSeq" id="WP_000686344.1">
    <property type="nucleotide sequence ID" value="NZ_WYDB01000004.1"/>
</dbReference>
<dbReference type="PDB" id="5UTO">
    <property type="method" value="X-ray"/>
    <property type="resolution" value="1.83 A"/>
    <property type="chains" value="A/B=1-288"/>
</dbReference>
<dbReference type="PDB" id="5WOO">
    <property type="method" value="X-ray"/>
    <property type="resolution" value="1.78 A"/>
    <property type="chains" value="A/B=1-288"/>
</dbReference>
<dbReference type="PDB" id="6ALW">
    <property type="method" value="X-ray"/>
    <property type="resolution" value="1.63 A"/>
    <property type="chains" value="A/B=1-288"/>
</dbReference>
<dbReference type="PDB" id="6MH9">
    <property type="method" value="X-ray"/>
    <property type="resolution" value="2.02 A"/>
    <property type="chains" value="A/B=1-288"/>
</dbReference>
<dbReference type="PDB" id="6NM1">
    <property type="method" value="X-ray"/>
    <property type="resolution" value="2.33 A"/>
    <property type="chains" value="A/B=1-288"/>
</dbReference>
<dbReference type="PDB" id="6NYU">
    <property type="method" value="X-ray"/>
    <property type="resolution" value="2.18 A"/>
    <property type="chains" value="A/B=1-288"/>
</dbReference>
<dbReference type="PDB" id="7SCL">
    <property type="method" value="X-ray"/>
    <property type="resolution" value="1.60 A"/>
    <property type="chains" value="A/B=1-288"/>
</dbReference>
<dbReference type="PDB" id="7SG3">
    <property type="method" value="X-ray"/>
    <property type="resolution" value="2.35 A"/>
    <property type="chains" value="A/B=1-288"/>
</dbReference>
<dbReference type="PDBsum" id="5UTO"/>
<dbReference type="PDBsum" id="5WOO"/>
<dbReference type="PDBsum" id="6ALW"/>
<dbReference type="PDBsum" id="6MH9"/>
<dbReference type="PDBsum" id="6NM1"/>
<dbReference type="PDBsum" id="6NYU"/>
<dbReference type="PDBsum" id="7SCL"/>
<dbReference type="PDBsum" id="7SG3"/>
<dbReference type="SMR" id="P0A0N2"/>
<dbReference type="OMA" id="VYPFDSE"/>
<dbReference type="GO" id="GO:0008289">
    <property type="term" value="F:lipid binding"/>
    <property type="evidence" value="ECO:0007669"/>
    <property type="project" value="UniProtKB-KW"/>
</dbReference>
<dbReference type="Gene3D" id="3.30.1180.10">
    <property type="match status" value="1"/>
</dbReference>
<dbReference type="Gene3D" id="3.40.50.10170">
    <property type="match status" value="1"/>
</dbReference>
<dbReference type="InterPro" id="IPR003797">
    <property type="entry name" value="DegV"/>
</dbReference>
<dbReference type="InterPro" id="IPR043168">
    <property type="entry name" value="DegV_C"/>
</dbReference>
<dbReference type="InterPro" id="IPR050270">
    <property type="entry name" value="DegV_domain_contain"/>
</dbReference>
<dbReference type="NCBIfam" id="TIGR00762">
    <property type="entry name" value="DegV"/>
    <property type="match status" value="1"/>
</dbReference>
<dbReference type="NCBIfam" id="NF038249">
    <property type="entry name" value="fatty_FakB1"/>
    <property type="match status" value="1"/>
</dbReference>
<dbReference type="PANTHER" id="PTHR33434">
    <property type="entry name" value="DEGV DOMAIN-CONTAINING PROTEIN DR_1986-RELATED"/>
    <property type="match status" value="1"/>
</dbReference>
<dbReference type="PANTHER" id="PTHR33434:SF2">
    <property type="entry name" value="FATTY ACID-BINDING PROTEIN TM_1468"/>
    <property type="match status" value="1"/>
</dbReference>
<dbReference type="Pfam" id="PF02645">
    <property type="entry name" value="DegV"/>
    <property type="match status" value="1"/>
</dbReference>
<dbReference type="SUPFAM" id="SSF82549">
    <property type="entry name" value="DAK1/DegV-like"/>
    <property type="match status" value="1"/>
</dbReference>
<dbReference type="PROSITE" id="PS51482">
    <property type="entry name" value="DEGV"/>
    <property type="match status" value="1"/>
</dbReference>
<comment type="function">
    <text evidence="1">May bind long-chain fatty acids, such as palmitate, and may play a role in lipid transport or fatty acid metabolism.</text>
</comment>
<organism>
    <name type="scientific">Staphylococcus aureus</name>
    <dbReference type="NCBI Taxonomy" id="1280"/>
    <lineage>
        <taxon>Bacteria</taxon>
        <taxon>Bacillati</taxon>
        <taxon>Bacillota</taxon>
        <taxon>Bacilli</taxon>
        <taxon>Bacillales</taxon>
        <taxon>Staphylococcaceae</taxon>
        <taxon>Staphylococcus</taxon>
    </lineage>
</organism>
<protein>
    <recommendedName>
        <fullName>DegV domain-containing protein</fullName>
    </recommendedName>
</protein>
<evidence type="ECO:0000250" key="1"/>
<evidence type="ECO:0000250" key="2">
    <source>
        <dbReference type="UniProtKB" id="Q9X1H9"/>
    </source>
</evidence>
<evidence type="ECO:0000255" key="3">
    <source>
        <dbReference type="PROSITE-ProRule" id="PRU00815"/>
    </source>
</evidence>
<evidence type="ECO:0007829" key="4">
    <source>
        <dbReference type="PDB" id="5UTO"/>
    </source>
</evidence>
<evidence type="ECO:0007829" key="5">
    <source>
        <dbReference type="PDB" id="5WOO"/>
    </source>
</evidence>
<evidence type="ECO:0007829" key="6">
    <source>
        <dbReference type="PDB" id="6ALW"/>
    </source>
</evidence>
<evidence type="ECO:0007829" key="7">
    <source>
        <dbReference type="PDB" id="6NM1"/>
    </source>
</evidence>
<feature type="chain" id="PRO_0000209785" description="DegV domain-containing protein">
    <location>
        <begin position="1"/>
        <end position="288"/>
    </location>
</feature>
<feature type="domain" description="DegV" evidence="3">
    <location>
        <begin position="3"/>
        <end position="282"/>
    </location>
</feature>
<feature type="binding site" evidence="2">
    <location>
        <position position="62"/>
    </location>
    <ligand>
        <name>hexadecanoate</name>
        <dbReference type="ChEBI" id="CHEBI:7896"/>
    </ligand>
</feature>
<feature type="binding site" evidence="2">
    <location>
        <position position="95"/>
    </location>
    <ligand>
        <name>hexadecanoate</name>
        <dbReference type="ChEBI" id="CHEBI:7896"/>
    </ligand>
</feature>
<feature type="strand" evidence="6">
    <location>
        <begin position="3"/>
        <end position="8"/>
    </location>
</feature>
<feature type="helix" evidence="6">
    <location>
        <begin position="9"/>
        <end position="11"/>
    </location>
</feature>
<feature type="helix" evidence="6">
    <location>
        <begin position="15"/>
        <end position="21"/>
    </location>
</feature>
<feature type="strand" evidence="5">
    <location>
        <begin position="24"/>
        <end position="26"/>
    </location>
</feature>
<feature type="strand" evidence="6">
    <location>
        <begin position="29"/>
        <end position="31"/>
    </location>
</feature>
<feature type="strand" evidence="6">
    <location>
        <begin position="37"/>
        <end position="39"/>
    </location>
</feature>
<feature type="strand" evidence="4">
    <location>
        <begin position="42"/>
        <end position="44"/>
    </location>
</feature>
<feature type="helix" evidence="6">
    <location>
        <begin position="46"/>
        <end position="54"/>
    </location>
</feature>
<feature type="strand" evidence="7">
    <location>
        <begin position="56"/>
        <end position="58"/>
    </location>
</feature>
<feature type="strand" evidence="6">
    <location>
        <begin position="61"/>
        <end position="63"/>
    </location>
</feature>
<feature type="helix" evidence="6">
    <location>
        <begin position="67"/>
        <end position="79"/>
    </location>
</feature>
<feature type="strand" evidence="6">
    <location>
        <begin position="83"/>
        <end position="89"/>
    </location>
</feature>
<feature type="turn" evidence="6">
    <location>
        <begin position="92"/>
        <end position="94"/>
    </location>
</feature>
<feature type="helix" evidence="6">
    <location>
        <begin position="97"/>
        <end position="107"/>
    </location>
</feature>
<feature type="strand" evidence="6">
    <location>
        <begin position="111"/>
        <end position="117"/>
    </location>
</feature>
<feature type="helix" evidence="6">
    <location>
        <begin position="122"/>
        <end position="137"/>
    </location>
</feature>
<feature type="helix" evidence="6">
    <location>
        <begin position="142"/>
        <end position="153"/>
    </location>
</feature>
<feature type="strand" evidence="6">
    <location>
        <begin position="156"/>
        <end position="161"/>
    </location>
</feature>
<feature type="helix" evidence="6">
    <location>
        <begin position="166"/>
        <end position="170"/>
    </location>
</feature>
<feature type="turn" evidence="6">
    <location>
        <begin position="178"/>
        <end position="180"/>
    </location>
</feature>
<feature type="turn" evidence="7">
    <location>
        <begin position="183"/>
        <end position="186"/>
    </location>
</feature>
<feature type="strand" evidence="6">
    <location>
        <begin position="188"/>
        <end position="194"/>
    </location>
</feature>
<feature type="strand" evidence="6">
    <location>
        <begin position="197"/>
        <end position="206"/>
    </location>
</feature>
<feature type="helix" evidence="6">
    <location>
        <begin position="207"/>
        <end position="222"/>
    </location>
</feature>
<feature type="strand" evidence="6">
    <location>
        <begin position="229"/>
        <end position="234"/>
    </location>
</feature>
<feature type="helix" evidence="6">
    <location>
        <begin position="238"/>
        <end position="251"/>
    </location>
</feature>
<feature type="strand" evidence="6">
    <location>
        <begin position="256"/>
        <end position="262"/>
    </location>
</feature>
<feature type="helix" evidence="6">
    <location>
        <begin position="265"/>
        <end position="271"/>
    </location>
</feature>
<feature type="strand" evidence="6">
    <location>
        <begin position="276"/>
        <end position="283"/>
    </location>
</feature>